<accession>Q6P6Q9</accession>
<sequence length="477" mass="54195">MFRLNALSALAELAVGSRWYHGTSQPTQTKRRLMLVAFLGASAVTASTGLLWKKAHAESPPSVNSKKTDAGDKGKSKDTREVSSHEGSAADTAAEPYPEEKKKKRSGFRDRKVMEYENRIRAYSTPDKIFRYFATLKVINEPGETEVFMTPQDFVRSITPNEKQPEHLGLDQYIIKRFDGKKIAQEREKFADEGSIFYTLGECGLISFSDYIFLTTVLSTPQRNFEIAFKMFDLNGDGEVDMEEFEQVQSIIRSQTSMGMRHRDRPTTGNTLKSGLCSALTTYFFGADLKGKLTIKNFLEFQRKLQHDVLKLEFERHDPVDGRISERQFGGMLLAYSGVQSKKLTAMQRQLKKHFKDGKGLTFQEVENFFTFLKNINDVDTALSFYHMAGASLDKVTMQQVARTVAKVELSDHVCDVVFALFDCDGNGELSNKEFVSIMKQRLMRGLEKPKDMGFTRLMQAMWKCAQETAWDFALPK</sequence>
<reference key="1">
    <citation type="journal article" date="2004" name="Genome Res.">
        <title>The status, quality, and expansion of the NIH full-length cDNA project: the Mammalian Gene Collection (MGC).</title>
        <authorList>
            <consortium name="The MGC Project Team"/>
        </authorList>
    </citation>
    <scope>NUCLEOTIDE SEQUENCE [LARGE SCALE MRNA]</scope>
    <source>
        <tissue>Prostate</tissue>
    </source>
</reference>
<keyword id="KW-0106">Calcium</keyword>
<keyword id="KW-0109">Calcium transport</keyword>
<keyword id="KW-1015">Disulfide bond</keyword>
<keyword id="KW-0406">Ion transport</keyword>
<keyword id="KW-0472">Membrane</keyword>
<keyword id="KW-0479">Metal-binding</keyword>
<keyword id="KW-0488">Methylation</keyword>
<keyword id="KW-0496">Mitochondrion</keyword>
<keyword id="KW-0999">Mitochondrion inner membrane</keyword>
<keyword id="KW-0597">Phosphoprotein</keyword>
<keyword id="KW-1185">Reference proteome</keyword>
<keyword id="KW-0677">Repeat</keyword>
<keyword id="KW-0809">Transit peptide</keyword>
<keyword id="KW-0813">Transport</keyword>
<comment type="function">
    <text evidence="2">Calcium sensor of the mitochondrial calcium uniporter (MCU) channel, which senses calcium level via its EF-hand domains. MICU1 and MICU2 (or MICU3) form a disulfide-linked heterodimer that stimulates and inhibits MCU activity, depending on the concentration of calcium. At low calcium levels, MICU1 occludes the pore of the MCU channel, preventing mitochondrial calcium uptake. At higher calcium levels, calcium-binding to MICU1 and MICU2 (or MICU3) induces a conformational change that weakens MCU-MICU1 interactions and moves the MICU1-MICU2 heterodimer away from the pore, allowing calcium permeation through the MCU channel. Also required to protect against manganese toxicity by preventing manganese uptake by MCU: mechanistically, manganese-binding to its EF-hand domains does not induce any conformational change, maintaining MCU pore occlusion. Acts as a regulator of mitochondrial cristae structure independently of its ability to regulate the mitochondrial calcium uniporter channel. Regulates glucose-dependent insulin secretion in pancreatic beta-cells by regulating mitochondrial calcium uptake. Induces T-helper 1-mediated autoreactivity, which is accompanied by the release of IFNG.</text>
</comment>
<comment type="subunit">
    <text evidence="2">Heterodimer; disulfide-linked; heterodimerizes with MICU2 or MICU3. Homodimer; disulfide-linked. Component of the uniplex complex, composed of MCU, EMRE/SMDT1, MICU1 and MICU2 (or MICU3) in a 4:4:1:1 stoichiometry. The composition of calcium sensors within the uniplex complex can differ depending on tissues: a MICU1 homodimer can be present instead of the MICU1-MICU2 heterodimer in skeletal-muscle and kidney. MICU1 is recruited to the uniplex complex by EMRE/SMDT1, and it associates with MCU at low calcium levels, occluding the pore of the MCU channel. Associates with the MICOS complex. Interacts with SLC25A23. Interacts with CHCHD4/MIA40; which introduces the interchain disulfide bond with MICU2. Interacts (when methylated) with UCP2; leading to decrease the calcium sensitivity of MICU1.</text>
</comment>
<comment type="subcellular location">
    <subcellularLocation>
        <location evidence="2">Mitochondrion intermembrane space</location>
    </subcellularLocation>
    <subcellularLocation>
        <location evidence="2">Mitochondrion inner membrane</location>
    </subcellularLocation>
    <text evidence="2">Recruited to the mitochondrial inner membrane by EMRE/SMDT1. Also localizes to mitochondrial cristae junctions.</text>
</comment>
<comment type="domain">
    <text evidence="2">The EF-hand domains have high affinity for calcium and act as sensors of calcium levels.</text>
</comment>
<comment type="domain">
    <text evidence="2">The polybasic region mediates interaction with EMRE/SMDT1 and association with the uniplex complex.</text>
</comment>
<comment type="domain">
    <text evidence="2">Lysine and arginine residues in the K/R-ring mediate electrostatic interactions with MCU and play a key role in MCU inhibition in absence of calcium.</text>
</comment>
<comment type="domain">
    <text evidence="2">The C-helix plays a key role in mitochondrial calcium uptake, probably by mediating interaction with MICU2.</text>
</comment>
<comment type="PTM">
    <text evidence="1">Phosphorylation at Ser-124 by AKT1 impairs its maturation and stability.</text>
</comment>
<comment type="PTM">
    <text evidence="2">Asymmetric dimethylation at Arg-457 by PRMT1 decreases the calcium sensitivity of MICU1 by promoting interaction with UCP2.</text>
</comment>
<comment type="PTM">
    <text evidence="2">Degraded by YME1L1 when not complexed as homodimer or heterodimer. Not degraded when complexed as homodimer or heterodimer; the presence of the interchain disulfide bond protecting MICU1 from degradation by YME1L1.</text>
</comment>
<comment type="similarity">
    <text evidence="6">Belongs to the MICU1 family. MICU1 subfamily.</text>
</comment>
<evidence type="ECO:0000250" key="1">
    <source>
        <dbReference type="UniProtKB" id="Q8VCX5"/>
    </source>
</evidence>
<evidence type="ECO:0000250" key="2">
    <source>
        <dbReference type="UniProtKB" id="Q9BPX6"/>
    </source>
</evidence>
<evidence type="ECO:0000255" key="3"/>
<evidence type="ECO:0000255" key="4">
    <source>
        <dbReference type="PROSITE-ProRule" id="PRU00448"/>
    </source>
</evidence>
<evidence type="ECO:0000256" key="5">
    <source>
        <dbReference type="SAM" id="MobiDB-lite"/>
    </source>
</evidence>
<evidence type="ECO:0000305" key="6"/>
<protein>
    <recommendedName>
        <fullName>Calcium uptake protein 1, mitochondrial</fullName>
    </recommendedName>
    <alternativeName>
        <fullName>Calcium-binding atopy-related autoantigen 1 homolog</fullName>
    </alternativeName>
</protein>
<dbReference type="EMBL" id="BC062075">
    <property type="protein sequence ID" value="AAH62075.1"/>
    <property type="molecule type" value="mRNA"/>
</dbReference>
<dbReference type="RefSeq" id="NP_955444.1">
    <property type="nucleotide sequence ID" value="NM_199412.1"/>
</dbReference>
<dbReference type="SMR" id="Q6P6Q9"/>
<dbReference type="FunCoup" id="Q6P6Q9">
    <property type="interactions" value="2167"/>
</dbReference>
<dbReference type="STRING" id="10116.ENSRNOP00000071575"/>
<dbReference type="PhosphoSitePlus" id="Q6P6Q9"/>
<dbReference type="jPOST" id="Q6P6Q9"/>
<dbReference type="PaxDb" id="10116-ENSRNOP00000060514"/>
<dbReference type="GeneID" id="365567"/>
<dbReference type="KEGG" id="rno:365567"/>
<dbReference type="UCSC" id="RGD:735033">
    <property type="organism name" value="rat"/>
</dbReference>
<dbReference type="AGR" id="RGD:735033"/>
<dbReference type="CTD" id="10367"/>
<dbReference type="RGD" id="735033">
    <property type="gene designation" value="Micu1"/>
</dbReference>
<dbReference type="eggNOG" id="KOG2643">
    <property type="taxonomic scope" value="Eukaryota"/>
</dbReference>
<dbReference type="InParanoid" id="Q6P6Q9"/>
<dbReference type="PhylomeDB" id="Q6P6Q9"/>
<dbReference type="Reactome" id="R-RNO-8949215">
    <property type="pathway name" value="Mitochondrial calcium ion transport"/>
</dbReference>
<dbReference type="Reactome" id="R-RNO-8949664">
    <property type="pathway name" value="Processing of SMDT1"/>
</dbReference>
<dbReference type="PRO" id="PR:Q6P6Q9"/>
<dbReference type="Proteomes" id="UP000002494">
    <property type="component" value="Unplaced"/>
</dbReference>
<dbReference type="GO" id="GO:0034704">
    <property type="term" value="C:calcium channel complex"/>
    <property type="evidence" value="ECO:0000250"/>
    <property type="project" value="UniProtKB"/>
</dbReference>
<dbReference type="GO" id="GO:0044284">
    <property type="term" value="C:mitochondrial crista junction"/>
    <property type="evidence" value="ECO:0000266"/>
    <property type="project" value="RGD"/>
</dbReference>
<dbReference type="GO" id="GO:0005743">
    <property type="term" value="C:mitochondrial inner membrane"/>
    <property type="evidence" value="ECO:0000250"/>
    <property type="project" value="UniProtKB"/>
</dbReference>
<dbReference type="GO" id="GO:0005758">
    <property type="term" value="C:mitochondrial intermembrane space"/>
    <property type="evidence" value="ECO:0000250"/>
    <property type="project" value="UniProtKB"/>
</dbReference>
<dbReference type="GO" id="GO:0031966">
    <property type="term" value="C:mitochondrial membrane"/>
    <property type="evidence" value="ECO:0000250"/>
    <property type="project" value="UniProtKB"/>
</dbReference>
<dbReference type="GO" id="GO:0005739">
    <property type="term" value="C:mitochondrion"/>
    <property type="evidence" value="ECO:0000266"/>
    <property type="project" value="RGD"/>
</dbReference>
<dbReference type="GO" id="GO:1990246">
    <property type="term" value="C:uniplex complex"/>
    <property type="evidence" value="ECO:0000250"/>
    <property type="project" value="UniProtKB"/>
</dbReference>
<dbReference type="GO" id="GO:0019855">
    <property type="term" value="F:calcium channel inhibitor activity"/>
    <property type="evidence" value="ECO:0000266"/>
    <property type="project" value="RGD"/>
</dbReference>
<dbReference type="GO" id="GO:0005246">
    <property type="term" value="F:calcium channel regulator activity"/>
    <property type="evidence" value="ECO:0000266"/>
    <property type="project" value="RGD"/>
</dbReference>
<dbReference type="GO" id="GO:0005509">
    <property type="term" value="F:calcium ion binding"/>
    <property type="evidence" value="ECO:0000250"/>
    <property type="project" value="UniProtKB"/>
</dbReference>
<dbReference type="GO" id="GO:0061891">
    <property type="term" value="F:calcium ion sensor activity"/>
    <property type="evidence" value="ECO:0000250"/>
    <property type="project" value="UniProtKB"/>
</dbReference>
<dbReference type="GO" id="GO:0042802">
    <property type="term" value="F:identical protein binding"/>
    <property type="evidence" value="ECO:0000266"/>
    <property type="project" value="RGD"/>
</dbReference>
<dbReference type="GO" id="GO:0046982">
    <property type="term" value="F:protein heterodimerization activity"/>
    <property type="evidence" value="ECO:0000266"/>
    <property type="project" value="RGD"/>
</dbReference>
<dbReference type="GO" id="GO:0036444">
    <property type="term" value="P:calcium import into the mitochondrion"/>
    <property type="evidence" value="ECO:0000250"/>
    <property type="project" value="UniProtKB"/>
</dbReference>
<dbReference type="GO" id="GO:0070509">
    <property type="term" value="P:calcium ion import"/>
    <property type="evidence" value="ECO:0000250"/>
    <property type="project" value="UniProtKB"/>
</dbReference>
<dbReference type="GO" id="GO:0071277">
    <property type="term" value="P:cellular response to calcium ion"/>
    <property type="evidence" value="ECO:0000266"/>
    <property type="project" value="RGD"/>
</dbReference>
<dbReference type="GO" id="GO:0072732">
    <property type="term" value="P:cellular response to calcium ion starvation"/>
    <property type="evidence" value="ECO:0000266"/>
    <property type="project" value="RGD"/>
</dbReference>
<dbReference type="GO" id="GO:0051560">
    <property type="term" value="P:mitochondrial calcium ion homeostasis"/>
    <property type="evidence" value="ECO:0000250"/>
    <property type="project" value="UniProtKB"/>
</dbReference>
<dbReference type="GO" id="GO:0006851">
    <property type="term" value="P:mitochondrial calcium ion transmembrane transport"/>
    <property type="evidence" value="ECO:0000250"/>
    <property type="project" value="UniProtKB"/>
</dbReference>
<dbReference type="GO" id="GO:1903852">
    <property type="term" value="P:positive regulation of cristae formation"/>
    <property type="evidence" value="ECO:0000250"/>
    <property type="project" value="UniProtKB"/>
</dbReference>
<dbReference type="GO" id="GO:0051561">
    <property type="term" value="P:positive regulation of mitochondrial calcium ion concentration"/>
    <property type="evidence" value="ECO:0000250"/>
    <property type="project" value="UniProtKB"/>
</dbReference>
<dbReference type="GO" id="GO:0051260">
    <property type="term" value="P:protein homooligomerization"/>
    <property type="evidence" value="ECO:0000266"/>
    <property type="project" value="RGD"/>
</dbReference>
<dbReference type="GO" id="GO:1900069">
    <property type="term" value="P:regulation of cellular hyperosmotic salinity response"/>
    <property type="evidence" value="ECO:0000250"/>
    <property type="project" value="UniProtKB"/>
</dbReference>
<dbReference type="CDD" id="cd16173">
    <property type="entry name" value="EFh_MICU1"/>
    <property type="match status" value="1"/>
</dbReference>
<dbReference type="FunFam" id="1.10.238.10:FF:000088">
    <property type="entry name" value="Calcium uptake protein 1, mitochondrial"/>
    <property type="match status" value="1"/>
</dbReference>
<dbReference type="FunFam" id="1.10.238.10:FF:000159">
    <property type="entry name" value="Calcium uptake protein 1, mitochondrial"/>
    <property type="match status" value="1"/>
</dbReference>
<dbReference type="Gene3D" id="1.10.238.10">
    <property type="entry name" value="EF-hand"/>
    <property type="match status" value="2"/>
</dbReference>
<dbReference type="InterPro" id="IPR011992">
    <property type="entry name" value="EF-hand-dom_pair"/>
</dbReference>
<dbReference type="InterPro" id="IPR018247">
    <property type="entry name" value="EF_Hand_1_Ca_BS"/>
</dbReference>
<dbReference type="InterPro" id="IPR002048">
    <property type="entry name" value="EF_hand_dom"/>
</dbReference>
<dbReference type="InterPro" id="IPR039800">
    <property type="entry name" value="MICU1/2/3"/>
</dbReference>
<dbReference type="PANTHER" id="PTHR12294:SF1">
    <property type="entry name" value="CALCIUM UPTAKE PROTEIN 1, MITOCHONDRIAL"/>
    <property type="match status" value="1"/>
</dbReference>
<dbReference type="PANTHER" id="PTHR12294">
    <property type="entry name" value="EF HAND DOMAIN FAMILY A1,A2-RELATED"/>
    <property type="match status" value="1"/>
</dbReference>
<dbReference type="Pfam" id="PF13202">
    <property type="entry name" value="EF-hand_5"/>
    <property type="match status" value="1"/>
</dbReference>
<dbReference type="Pfam" id="PF13833">
    <property type="entry name" value="EF-hand_8"/>
    <property type="match status" value="1"/>
</dbReference>
<dbReference type="SMART" id="SM00054">
    <property type="entry name" value="EFh"/>
    <property type="match status" value="2"/>
</dbReference>
<dbReference type="SUPFAM" id="SSF47473">
    <property type="entry name" value="EF-hand"/>
    <property type="match status" value="2"/>
</dbReference>
<dbReference type="PROSITE" id="PS00018">
    <property type="entry name" value="EF_HAND_1"/>
    <property type="match status" value="2"/>
</dbReference>
<dbReference type="PROSITE" id="PS50222">
    <property type="entry name" value="EF_HAND_2"/>
    <property type="match status" value="3"/>
</dbReference>
<organism>
    <name type="scientific">Rattus norvegicus</name>
    <name type="common">Rat</name>
    <dbReference type="NCBI Taxonomy" id="10116"/>
    <lineage>
        <taxon>Eukaryota</taxon>
        <taxon>Metazoa</taxon>
        <taxon>Chordata</taxon>
        <taxon>Craniata</taxon>
        <taxon>Vertebrata</taxon>
        <taxon>Euteleostomi</taxon>
        <taxon>Mammalia</taxon>
        <taxon>Eutheria</taxon>
        <taxon>Euarchontoglires</taxon>
        <taxon>Glires</taxon>
        <taxon>Rodentia</taxon>
        <taxon>Myomorpha</taxon>
        <taxon>Muroidea</taxon>
        <taxon>Muridae</taxon>
        <taxon>Murinae</taxon>
        <taxon>Rattus</taxon>
    </lineage>
</organism>
<name>MICU1_RAT</name>
<feature type="transit peptide" description="Mitochondrion" evidence="2 3">
    <location>
        <begin position="1"/>
        <end position="33"/>
    </location>
</feature>
<feature type="chain" id="PRO_0000322993" description="Calcium uptake protein 1, mitochondrial">
    <location>
        <begin position="34"/>
        <end position="477"/>
    </location>
</feature>
<feature type="domain" description="EF-hand 1" evidence="4">
    <location>
        <begin position="220"/>
        <end position="255"/>
    </location>
</feature>
<feature type="domain" description="EF-hand 2; degenerate" evidence="4">
    <location>
        <begin position="356"/>
        <end position="376"/>
    </location>
</feature>
<feature type="domain" description="EF-hand 3" evidence="4">
    <location>
        <begin position="410"/>
        <end position="445"/>
    </location>
</feature>
<feature type="region of interest" description="Disordered" evidence="5">
    <location>
        <begin position="55"/>
        <end position="108"/>
    </location>
</feature>
<feature type="region of interest" description="Polybasic region" evidence="2">
    <location>
        <begin position="101"/>
        <end position="112"/>
    </location>
</feature>
<feature type="region of interest" description="K/R-ring" evidence="2">
    <location>
        <begin position="128"/>
        <end position="131"/>
    </location>
</feature>
<feature type="region of interest" description="K/R-ring" evidence="2">
    <location>
        <begin position="261"/>
        <end position="265"/>
    </location>
</feature>
<feature type="region of interest" description="C-helix region" evidence="2">
    <location>
        <begin position="457"/>
        <end position="467"/>
    </location>
</feature>
<feature type="compositionally biased region" description="Basic and acidic residues" evidence="5">
    <location>
        <begin position="66"/>
        <end position="84"/>
    </location>
</feature>
<feature type="binding site" evidence="4">
    <location>
        <position position="233"/>
    </location>
    <ligand>
        <name>Ca(2+)</name>
        <dbReference type="ChEBI" id="CHEBI:29108"/>
        <label>1</label>
    </ligand>
</feature>
<feature type="binding site" evidence="4">
    <location>
        <position position="235"/>
    </location>
    <ligand>
        <name>Ca(2+)</name>
        <dbReference type="ChEBI" id="CHEBI:29108"/>
        <label>1</label>
    </ligand>
</feature>
<feature type="binding site" evidence="4">
    <location>
        <position position="237"/>
    </location>
    <ligand>
        <name>Ca(2+)</name>
        <dbReference type="ChEBI" id="CHEBI:29108"/>
        <label>1</label>
    </ligand>
</feature>
<feature type="binding site" evidence="4">
    <location>
        <position position="239"/>
    </location>
    <ligand>
        <name>Ca(2+)</name>
        <dbReference type="ChEBI" id="CHEBI:29108"/>
        <label>1</label>
    </ligand>
</feature>
<feature type="binding site" evidence="4">
    <location>
        <position position="244"/>
    </location>
    <ligand>
        <name>Ca(2+)</name>
        <dbReference type="ChEBI" id="CHEBI:29108"/>
        <label>1</label>
    </ligand>
</feature>
<feature type="binding site" evidence="4">
    <location>
        <position position="423"/>
    </location>
    <ligand>
        <name>Ca(2+)</name>
        <dbReference type="ChEBI" id="CHEBI:29108"/>
        <label>2</label>
    </ligand>
</feature>
<feature type="binding site" evidence="4">
    <location>
        <position position="425"/>
    </location>
    <ligand>
        <name>Ca(2+)</name>
        <dbReference type="ChEBI" id="CHEBI:29108"/>
        <label>2</label>
    </ligand>
</feature>
<feature type="binding site" evidence="4">
    <location>
        <position position="427"/>
    </location>
    <ligand>
        <name>Ca(2+)</name>
        <dbReference type="ChEBI" id="CHEBI:29108"/>
        <label>2</label>
    </ligand>
</feature>
<feature type="binding site" evidence="4">
    <location>
        <position position="429"/>
    </location>
    <ligand>
        <name>Ca(2+)</name>
        <dbReference type="ChEBI" id="CHEBI:29108"/>
        <label>2</label>
    </ligand>
</feature>
<feature type="binding site" evidence="4">
    <location>
        <position position="434"/>
    </location>
    <ligand>
        <name>Ca(2+)</name>
        <dbReference type="ChEBI" id="CHEBI:29108"/>
        <label>2</label>
    </ligand>
</feature>
<feature type="modified residue" description="Phosphoserine" evidence="1">
    <location>
        <position position="124"/>
    </location>
</feature>
<feature type="modified residue" description="Asymmetric dimethylarginine" evidence="2">
    <location>
        <position position="457"/>
    </location>
</feature>
<feature type="disulfide bond" description="Interchain (with C-413 in MICU2)" evidence="2">
    <location>
        <position position="465"/>
    </location>
</feature>
<proteinExistence type="evidence at transcript level"/>
<gene>
    <name type="primary">Micu1</name>
    <name type="synonym">Cbara1</name>
</gene>